<feature type="chain" id="PRO_0000414863" description="Accessory Sec system protein translocase subunit SecY2">
    <location>
        <begin position="1"/>
        <end position="395"/>
    </location>
</feature>
<feature type="transmembrane region" description="Helical" evidence="1">
    <location>
        <begin position="13"/>
        <end position="33"/>
    </location>
</feature>
<feature type="transmembrane region" description="Helical" evidence="1">
    <location>
        <begin position="63"/>
        <end position="83"/>
    </location>
</feature>
<feature type="transmembrane region" description="Helical" evidence="1">
    <location>
        <begin position="102"/>
        <end position="122"/>
    </location>
</feature>
<feature type="transmembrane region" description="Helical" evidence="1">
    <location>
        <begin position="128"/>
        <end position="148"/>
    </location>
</feature>
<feature type="transmembrane region" description="Helical" evidence="1">
    <location>
        <begin position="157"/>
        <end position="177"/>
    </location>
</feature>
<feature type="transmembrane region" description="Helical" evidence="1">
    <location>
        <begin position="190"/>
        <end position="210"/>
    </location>
</feature>
<feature type="transmembrane region" description="Helical" evidence="1">
    <location>
        <begin position="239"/>
        <end position="259"/>
    </location>
</feature>
<feature type="transmembrane region" description="Helical" evidence="1">
    <location>
        <begin position="272"/>
        <end position="292"/>
    </location>
</feature>
<feature type="transmembrane region" description="Helical" evidence="1">
    <location>
        <begin position="326"/>
        <end position="346"/>
    </location>
</feature>
<feature type="transmembrane region" description="Helical" evidence="1">
    <location>
        <begin position="355"/>
        <end position="375"/>
    </location>
</feature>
<sequence>MEKKNLLNVIKKVSFSLFIVIIYVMGLYIPLPFAEGTKQYMEAVKNTPISILGAFSGANFTRISIFSIGLNPLMFSMLIIQLLSFTHSFGFDALSPKQVQYLMQFLTMIITIIQAALLVFAFTNRRNGLEDFEMILILSAGSCLVVWLCYRNMKYGVGASAPVILTSILNGAIPNIISNVKLLLTMKYAWIWLAALAIFILLLIKFWLAFTKAYYPLKVVNPSLPASSNLMTVPLGLNMAAMMMYMVGMAILTLPLMVGRYFSSSSLINNWVFQASFSAVMGILIFYFFTFVNFDPKEQAKSFRNNHYYIPNIAPGRPTQRYLNRLIWIIAFPGAVLNAFQLVFGLYGGNFLGNYAGFAIIPMNVVMITMFMGGIKDQIDTILFPYRYDRLLKDN</sequence>
<proteinExistence type="inferred from homology"/>
<comment type="function">
    <text evidence="1">Part of the accessory SecA2/SecY2 system specifically required for export of possible cell wall proteins. The central subunit of a protein translocation channel.</text>
</comment>
<comment type="subunit">
    <text evidence="1">Component of the accessory SecA2/SecY2 protein translocase complex required to export cell wall proteins. May form heterotrimers with SecE and SecG subunits.</text>
</comment>
<comment type="subcellular location">
    <subcellularLocation>
        <location evidence="1">Cell membrane</location>
        <topology evidence="1">Multi-pass membrane protein</topology>
    </subcellularLocation>
</comment>
<comment type="similarity">
    <text evidence="1">Belongs to the SecY/SEC61-alpha family. SecY2 subfamily.</text>
</comment>
<evidence type="ECO:0000255" key="1">
    <source>
        <dbReference type="HAMAP-Rule" id="MF_01466"/>
    </source>
</evidence>
<keyword id="KW-1003">Cell membrane</keyword>
<keyword id="KW-0472">Membrane</keyword>
<keyword id="KW-0653">Protein transport</keyword>
<keyword id="KW-0811">Translocation</keyword>
<keyword id="KW-0812">Transmembrane</keyword>
<keyword id="KW-1133">Transmembrane helix</keyword>
<keyword id="KW-0813">Transport</keyword>
<reference key="1">
    <citation type="journal article" date="2004" name="Proc. Natl. Acad. Sci. U.S.A.">
        <title>The genome sequence of the probiotic intestinal bacterium Lactobacillus johnsonii NCC 533.</title>
        <authorList>
            <person name="Pridmore R.D."/>
            <person name="Berger B."/>
            <person name="Desiere F."/>
            <person name="Vilanova D."/>
            <person name="Barretto C."/>
            <person name="Pittet A.-C."/>
            <person name="Zwahlen M.-C."/>
            <person name="Rouvet M."/>
            <person name="Altermann E."/>
            <person name="Barrangou R."/>
            <person name="Mollet B."/>
            <person name="Mercenier A."/>
            <person name="Klaenhammer T."/>
            <person name="Arigoni F."/>
            <person name="Schell M.A."/>
        </authorList>
    </citation>
    <scope>NUCLEOTIDE SEQUENCE [LARGE SCALE GENOMIC DNA]</scope>
    <source>
        <strain>CNCM I-1225 / La1 / NCC 533</strain>
    </source>
</reference>
<name>SECY2_LACJO</name>
<organism>
    <name type="scientific">Lactobacillus johnsonii (strain CNCM I-12250 / La1 / NCC 533)</name>
    <dbReference type="NCBI Taxonomy" id="257314"/>
    <lineage>
        <taxon>Bacteria</taxon>
        <taxon>Bacillati</taxon>
        <taxon>Bacillota</taxon>
        <taxon>Bacilli</taxon>
        <taxon>Lactobacillales</taxon>
        <taxon>Lactobacillaceae</taxon>
        <taxon>Lactobacillus</taxon>
    </lineage>
</organism>
<accession>Q74L41</accession>
<dbReference type="EMBL" id="AE017198">
    <property type="protein sequence ID" value="AAS08374.1"/>
    <property type="molecule type" value="Genomic_DNA"/>
</dbReference>
<dbReference type="RefSeq" id="WP_011161543.1">
    <property type="nucleotide sequence ID" value="NC_005362.1"/>
</dbReference>
<dbReference type="SMR" id="Q74L41"/>
<dbReference type="KEGG" id="ljo:LJ_0384"/>
<dbReference type="PATRIC" id="fig|257314.6.peg.406"/>
<dbReference type="eggNOG" id="COG0201">
    <property type="taxonomic scope" value="Bacteria"/>
</dbReference>
<dbReference type="HOGENOM" id="CLU_030313_4_0_9"/>
<dbReference type="Proteomes" id="UP000000581">
    <property type="component" value="Chromosome"/>
</dbReference>
<dbReference type="GO" id="GO:0005886">
    <property type="term" value="C:plasma membrane"/>
    <property type="evidence" value="ECO:0007669"/>
    <property type="project" value="UniProtKB-SubCell"/>
</dbReference>
<dbReference type="GO" id="GO:0065002">
    <property type="term" value="P:intracellular protein transmembrane transport"/>
    <property type="evidence" value="ECO:0007669"/>
    <property type="project" value="UniProtKB-UniRule"/>
</dbReference>
<dbReference type="GO" id="GO:0006605">
    <property type="term" value="P:protein targeting"/>
    <property type="evidence" value="ECO:0007669"/>
    <property type="project" value="UniProtKB-UniRule"/>
</dbReference>
<dbReference type="Gene3D" id="1.10.3370.10">
    <property type="entry name" value="SecY subunit domain"/>
    <property type="match status" value="1"/>
</dbReference>
<dbReference type="HAMAP" id="MF_01466">
    <property type="entry name" value="SecY2"/>
    <property type="match status" value="1"/>
</dbReference>
<dbReference type="InterPro" id="IPR002208">
    <property type="entry name" value="SecY/SEC61-alpha"/>
</dbReference>
<dbReference type="InterPro" id="IPR014269">
    <property type="entry name" value="SecY2"/>
</dbReference>
<dbReference type="InterPro" id="IPR023201">
    <property type="entry name" value="SecY_dom_sf"/>
</dbReference>
<dbReference type="NCBIfam" id="TIGR02920">
    <property type="entry name" value="acc_sec_Y2"/>
    <property type="match status" value="1"/>
</dbReference>
<dbReference type="Pfam" id="PF00344">
    <property type="entry name" value="SecY"/>
    <property type="match status" value="1"/>
</dbReference>
<dbReference type="PIRSF" id="PIRSF004557">
    <property type="entry name" value="SecY"/>
    <property type="match status" value="1"/>
</dbReference>
<dbReference type="PRINTS" id="PR00303">
    <property type="entry name" value="SECYTRNLCASE"/>
</dbReference>
<dbReference type="SUPFAM" id="SSF103491">
    <property type="entry name" value="Preprotein translocase SecY subunit"/>
    <property type="match status" value="1"/>
</dbReference>
<protein>
    <recommendedName>
        <fullName evidence="1">Accessory Sec system protein translocase subunit SecY2</fullName>
    </recommendedName>
</protein>
<gene>
    <name evidence="1" type="primary">secY2</name>
    <name type="ordered locus">LJ_0384</name>
</gene>